<protein>
    <recommendedName>
        <fullName evidence="1">5-methylthioadenosine/S-adenosylhomocysteine deaminase</fullName>
        <shortName evidence="1">MTA/SAH deaminase</shortName>
        <ecNumber evidence="1">3.5.4.28</ecNumber>
        <ecNumber evidence="1">3.5.4.31</ecNumber>
    </recommendedName>
</protein>
<accession>B7JJI0</accession>
<evidence type="ECO:0000255" key="1">
    <source>
        <dbReference type="HAMAP-Rule" id="MF_01281"/>
    </source>
</evidence>
<sequence length="435" mass="48144">MKTTYVNATIVTMNEQNEVIENGYIIVENDKIIDVNSGEFASDFEVDEVIDMKGKWVLPGLVNTHTHVVMSLLRGIGDDMLLQPWLETRIWPLESQFTPELAVASTELGLLEMVKSGTTSFSDMFNPIGVDQDAIMETVSRSGMRAAVSRTLFSFGTQEDEKKAIEEAEKYVKRYYNESGMLTTMVAPHSPYTCSTELLEECARIAVENQTMVHIHLSETEREVRDIEAQYGKRPVEYVASCGLFKRPTVIAHGVVLNDNERAFLAEHDVRVAHNPNSNLKLGSGIANVKAMLEAGMKVGIATDSVASNNNLDMFEEMRIATLLQKGIHQDATALPVETALTLATKGAAEVIGMKQTGSLEVGKCADFITIDPSNKPHLQPADEVLSHLVYAASGKDISDVIINGKRVVWNGECKTLDEERIIFEASRYKRGLQR</sequence>
<gene>
    <name evidence="1" type="primary">mtaD</name>
    <name type="ordered locus">BCAH820_1903</name>
</gene>
<keyword id="KW-0378">Hydrolase</keyword>
<keyword id="KW-0479">Metal-binding</keyword>
<keyword id="KW-0862">Zinc</keyword>
<proteinExistence type="inferred from homology"/>
<reference key="1">
    <citation type="submission" date="2008-10" db="EMBL/GenBank/DDBJ databases">
        <title>Genome sequence of Bacillus cereus AH820.</title>
        <authorList>
            <person name="Dodson R.J."/>
            <person name="Durkin A.S."/>
            <person name="Rosovitz M.J."/>
            <person name="Rasko D.A."/>
            <person name="Hoffmaster A."/>
            <person name="Ravel J."/>
            <person name="Sutton G."/>
        </authorList>
    </citation>
    <scope>NUCLEOTIDE SEQUENCE [LARGE SCALE GENOMIC DNA]</scope>
    <source>
        <strain>AH820</strain>
    </source>
</reference>
<comment type="function">
    <text evidence="1">Catalyzes the deamination of 5-methylthioadenosine and S-adenosyl-L-homocysteine into 5-methylthioinosine and S-inosyl-L-homocysteine, respectively. Is also able to deaminate adenosine.</text>
</comment>
<comment type="catalytic activity">
    <reaction evidence="1">
        <text>S-adenosyl-L-homocysteine + H2O + H(+) = S-inosyl-L-homocysteine + NH4(+)</text>
        <dbReference type="Rhea" id="RHEA:20716"/>
        <dbReference type="ChEBI" id="CHEBI:15377"/>
        <dbReference type="ChEBI" id="CHEBI:15378"/>
        <dbReference type="ChEBI" id="CHEBI:28938"/>
        <dbReference type="ChEBI" id="CHEBI:57856"/>
        <dbReference type="ChEBI" id="CHEBI:57985"/>
        <dbReference type="EC" id="3.5.4.28"/>
    </reaction>
</comment>
<comment type="catalytic activity">
    <reaction evidence="1">
        <text>S-methyl-5'-thioadenosine + H2O + H(+) = S-methyl-5'-thioinosine + NH4(+)</text>
        <dbReference type="Rhea" id="RHEA:25025"/>
        <dbReference type="ChEBI" id="CHEBI:15377"/>
        <dbReference type="ChEBI" id="CHEBI:15378"/>
        <dbReference type="ChEBI" id="CHEBI:17509"/>
        <dbReference type="ChEBI" id="CHEBI:28938"/>
        <dbReference type="ChEBI" id="CHEBI:48595"/>
        <dbReference type="EC" id="3.5.4.31"/>
    </reaction>
</comment>
<comment type="cofactor">
    <cofactor evidence="1">
        <name>Zn(2+)</name>
        <dbReference type="ChEBI" id="CHEBI:29105"/>
    </cofactor>
    <text evidence="1">Binds 1 zinc ion per subunit.</text>
</comment>
<comment type="similarity">
    <text evidence="1">Belongs to the metallo-dependent hydrolases superfamily. MTA/SAH deaminase family.</text>
</comment>
<organism>
    <name type="scientific">Bacillus cereus (strain AH820)</name>
    <dbReference type="NCBI Taxonomy" id="405535"/>
    <lineage>
        <taxon>Bacteria</taxon>
        <taxon>Bacillati</taxon>
        <taxon>Bacillota</taxon>
        <taxon>Bacilli</taxon>
        <taxon>Bacillales</taxon>
        <taxon>Bacillaceae</taxon>
        <taxon>Bacillus</taxon>
        <taxon>Bacillus cereus group</taxon>
    </lineage>
</organism>
<dbReference type="EC" id="3.5.4.28" evidence="1"/>
<dbReference type="EC" id="3.5.4.31" evidence="1"/>
<dbReference type="EMBL" id="CP001283">
    <property type="protein sequence ID" value="ACK87794.1"/>
    <property type="molecule type" value="Genomic_DNA"/>
</dbReference>
<dbReference type="SMR" id="B7JJI0"/>
<dbReference type="KEGG" id="bcu:BCAH820_1903"/>
<dbReference type="HOGENOM" id="CLU_012358_2_0_9"/>
<dbReference type="Proteomes" id="UP000001363">
    <property type="component" value="Chromosome"/>
</dbReference>
<dbReference type="GO" id="GO:0090614">
    <property type="term" value="F:5'-methylthioadenosine deaminase activity"/>
    <property type="evidence" value="ECO:0007669"/>
    <property type="project" value="UniProtKB-UniRule"/>
</dbReference>
<dbReference type="GO" id="GO:0046872">
    <property type="term" value="F:metal ion binding"/>
    <property type="evidence" value="ECO:0007669"/>
    <property type="project" value="UniProtKB-KW"/>
</dbReference>
<dbReference type="GO" id="GO:0050270">
    <property type="term" value="F:S-adenosylhomocysteine deaminase activity"/>
    <property type="evidence" value="ECO:0007669"/>
    <property type="project" value="UniProtKB-UniRule"/>
</dbReference>
<dbReference type="CDD" id="cd01298">
    <property type="entry name" value="ATZ_TRZ_like"/>
    <property type="match status" value="1"/>
</dbReference>
<dbReference type="FunFam" id="3.20.20.140:FF:000014">
    <property type="entry name" value="5-methylthioadenosine/S-adenosylhomocysteine deaminase"/>
    <property type="match status" value="1"/>
</dbReference>
<dbReference type="Gene3D" id="3.20.20.140">
    <property type="entry name" value="Metal-dependent hydrolases"/>
    <property type="match status" value="1"/>
</dbReference>
<dbReference type="Gene3D" id="2.30.40.10">
    <property type="entry name" value="Urease, subunit C, domain 1"/>
    <property type="match status" value="1"/>
</dbReference>
<dbReference type="HAMAP" id="MF_01281">
    <property type="entry name" value="MTA_SAH_deamin"/>
    <property type="match status" value="1"/>
</dbReference>
<dbReference type="InterPro" id="IPR006680">
    <property type="entry name" value="Amidohydro-rel"/>
</dbReference>
<dbReference type="InterPro" id="IPR023512">
    <property type="entry name" value="Deaminase_MtaD/DadD"/>
</dbReference>
<dbReference type="InterPro" id="IPR011059">
    <property type="entry name" value="Metal-dep_hydrolase_composite"/>
</dbReference>
<dbReference type="InterPro" id="IPR032466">
    <property type="entry name" value="Metal_Hydrolase"/>
</dbReference>
<dbReference type="InterPro" id="IPR050287">
    <property type="entry name" value="MTA/SAH_deaminase"/>
</dbReference>
<dbReference type="NCBIfam" id="NF012037">
    <property type="entry name" value="PRK15493.1"/>
    <property type="match status" value="1"/>
</dbReference>
<dbReference type="PANTHER" id="PTHR43794:SF11">
    <property type="entry name" value="AMIDOHYDROLASE-RELATED DOMAIN-CONTAINING PROTEIN"/>
    <property type="match status" value="1"/>
</dbReference>
<dbReference type="PANTHER" id="PTHR43794">
    <property type="entry name" value="AMINOHYDROLASE SSNA-RELATED"/>
    <property type="match status" value="1"/>
</dbReference>
<dbReference type="Pfam" id="PF01979">
    <property type="entry name" value="Amidohydro_1"/>
    <property type="match status" value="1"/>
</dbReference>
<dbReference type="SUPFAM" id="SSF51338">
    <property type="entry name" value="Composite domain of metallo-dependent hydrolases"/>
    <property type="match status" value="1"/>
</dbReference>
<dbReference type="SUPFAM" id="SSF51556">
    <property type="entry name" value="Metallo-dependent hydrolases"/>
    <property type="match status" value="1"/>
</dbReference>
<feature type="chain" id="PRO_1000140345" description="5-methylthioadenosine/S-adenosylhomocysteine deaminase">
    <location>
        <begin position="1"/>
        <end position="435"/>
    </location>
</feature>
<feature type="binding site" evidence="1">
    <location>
        <position position="65"/>
    </location>
    <ligand>
        <name>Zn(2+)</name>
        <dbReference type="ChEBI" id="CHEBI:29105"/>
    </ligand>
</feature>
<feature type="binding site" evidence="1">
    <location>
        <position position="67"/>
    </location>
    <ligand>
        <name>Zn(2+)</name>
        <dbReference type="ChEBI" id="CHEBI:29105"/>
    </ligand>
</feature>
<feature type="binding site" evidence="1">
    <location>
        <position position="94"/>
    </location>
    <ligand>
        <name>substrate</name>
    </ligand>
</feature>
<feature type="binding site" evidence="1">
    <location>
        <position position="150"/>
    </location>
    <ligand>
        <name>substrate</name>
    </ligand>
</feature>
<feature type="binding site" evidence="1">
    <location>
        <position position="189"/>
    </location>
    <ligand>
        <name>substrate</name>
    </ligand>
</feature>
<feature type="binding site" evidence="1">
    <location>
        <position position="216"/>
    </location>
    <ligand>
        <name>Zn(2+)</name>
        <dbReference type="ChEBI" id="CHEBI:29105"/>
    </ligand>
</feature>
<feature type="binding site" evidence="1">
    <location>
        <position position="219"/>
    </location>
    <ligand>
        <name>substrate</name>
    </ligand>
</feature>
<feature type="binding site" evidence="1">
    <location>
        <position position="304"/>
    </location>
    <ligand>
        <name>substrate</name>
    </ligand>
</feature>
<feature type="binding site" evidence="1">
    <location>
        <position position="304"/>
    </location>
    <ligand>
        <name>Zn(2+)</name>
        <dbReference type="ChEBI" id="CHEBI:29105"/>
    </ligand>
</feature>
<name>MTAD_BACC0</name>